<accession>P0DJM6</accession>
<name>PA2B_PROMB</name>
<sequence length="23" mass="2730">NLLQFNKMIKIMTKKNAIPFYSS</sequence>
<feature type="chain" id="PRO_0000418561" description="Basic phospholipase A2 mangshantoxin">
    <location>
        <begin position="1"/>
        <end position="23" status="greater than"/>
    </location>
</feature>
<feature type="non-terminal residue">
    <location>
        <position position="23"/>
    </location>
</feature>
<dbReference type="EC" id="3.1.1.4"/>
<dbReference type="GO" id="GO:0005576">
    <property type="term" value="C:extracellular region"/>
    <property type="evidence" value="ECO:0007669"/>
    <property type="project" value="UniProtKB-SubCell"/>
</dbReference>
<dbReference type="GO" id="GO:0046872">
    <property type="term" value="F:metal ion binding"/>
    <property type="evidence" value="ECO:0007669"/>
    <property type="project" value="UniProtKB-KW"/>
</dbReference>
<dbReference type="GO" id="GO:0004623">
    <property type="term" value="F:phospholipase A2 activity"/>
    <property type="evidence" value="ECO:0007669"/>
    <property type="project" value="UniProtKB-EC"/>
</dbReference>
<dbReference type="GO" id="GO:0090729">
    <property type="term" value="F:toxin activity"/>
    <property type="evidence" value="ECO:0007669"/>
    <property type="project" value="UniProtKB-KW"/>
</dbReference>
<dbReference type="GO" id="GO:0016042">
    <property type="term" value="P:lipid catabolic process"/>
    <property type="evidence" value="ECO:0007669"/>
    <property type="project" value="UniProtKB-KW"/>
</dbReference>
<protein>
    <recommendedName>
        <fullName>Basic phospholipase A2 mangshantoxin</fullName>
        <shortName>svPLA2</shortName>
        <ecNumber>3.1.1.4</ecNumber>
    </recommendedName>
    <alternativeName>
        <fullName>Phosphatidylcholine 2-acylhydrolase</fullName>
    </alternativeName>
</protein>
<proteinExistence type="evidence at protein level"/>
<evidence type="ECO:0000250" key="1"/>
<evidence type="ECO:0000269" key="2">
    <source>
    </source>
</evidence>
<evidence type="ECO:0000305" key="3"/>
<evidence type="ECO:0000305" key="4">
    <source>
    </source>
</evidence>
<reference key="1">
    <citation type="journal article" date="2004" name="Biochem. J.">
        <title>Molecular evolution and structure-function relationships of crotoxin-like and asparagine-6-containing phospholipases A2 in pit viper venoms.</title>
        <authorList>
            <person name="Chen Y.-H."/>
            <person name="Wang Y.-M."/>
            <person name="Hseu M.-J."/>
            <person name="Tsai I.-H."/>
        </authorList>
    </citation>
    <scope>PROTEIN SEQUENCE</scope>
    <scope>FUNCTION</scope>
    <scope>BIOPHYSICOCHEMICAL PROPERTIES</scope>
    <scope>MASS SPECTROMETRY</scope>
    <source>
        <tissue>Venom</tissue>
    </source>
</reference>
<comment type="function">
    <text evidence="2">Snake venom phospholipase A2 (PLA2) that displays presynaptic neurotoxicity. PLA2 catalyzes the calcium-dependent hydrolysis of the 2-acyl groups in 3-sn-phosphoglycerides.</text>
</comment>
<comment type="catalytic activity">
    <reaction>
        <text>a 1,2-diacyl-sn-glycero-3-phosphocholine + H2O = a 1-acyl-sn-glycero-3-phosphocholine + a fatty acid + H(+)</text>
        <dbReference type="Rhea" id="RHEA:15801"/>
        <dbReference type="ChEBI" id="CHEBI:15377"/>
        <dbReference type="ChEBI" id="CHEBI:15378"/>
        <dbReference type="ChEBI" id="CHEBI:28868"/>
        <dbReference type="ChEBI" id="CHEBI:57643"/>
        <dbReference type="ChEBI" id="CHEBI:58168"/>
        <dbReference type="EC" id="3.1.1.4"/>
    </reaction>
</comment>
<comment type="cofactor">
    <cofactor evidence="1">
        <name>Ca(2+)</name>
        <dbReference type="ChEBI" id="CHEBI:29108"/>
    </cofactor>
    <text evidence="1">Binds 1 Ca(2+) ion.</text>
</comment>
<comment type="biophysicochemical properties">
    <kinetics>
        <Vmax evidence="2">521.0 umol/min/mg enzyme with DPPC + deoxycholate as substrate (at pH 7.4 and 37 degrees Celsius)</Vmax>
        <Vmax evidence="2">155.0 umol/min/mg enzyme with DPPC + Triton X-100 as substrate (at pH 7.4 and 37 degrees Celsius)</Vmax>
        <text>When tested as a monomer.</text>
    </kinetics>
</comment>
<comment type="subcellular location">
    <subcellularLocation>
        <location>Secreted</location>
    </subcellularLocation>
</comment>
<comment type="tissue specificity">
    <text>Expressed by the venom gland.</text>
</comment>
<comment type="PTM">
    <text evidence="1">Contains 7 disulfide bonds.</text>
</comment>
<comment type="mass spectrometry" mass="13902.0" method="Electrospray" evidence="2"/>
<comment type="miscellaneous">
    <text evidence="4">Negative results: does not show myotoxic activities.</text>
</comment>
<comment type="similarity">
    <text evidence="3">Belongs to the phospholipase A2 family. Group II subfamily.</text>
</comment>
<keyword id="KW-0106">Calcium</keyword>
<keyword id="KW-0903">Direct protein sequencing</keyword>
<keyword id="KW-1015">Disulfide bond</keyword>
<keyword id="KW-0378">Hydrolase</keyword>
<keyword id="KW-0442">Lipid degradation</keyword>
<keyword id="KW-0443">Lipid metabolism</keyword>
<keyword id="KW-0479">Metal-binding</keyword>
<keyword id="KW-0528">Neurotoxin</keyword>
<keyword id="KW-0638">Presynaptic neurotoxin</keyword>
<keyword id="KW-0964">Secreted</keyword>
<keyword id="KW-0800">Toxin</keyword>
<organism>
    <name type="scientific">Protobothrops mangshanensis</name>
    <name type="common">Mangshan pitviper</name>
    <name type="synonym">Zhaoermia mangshanensis</name>
    <dbReference type="NCBI Taxonomy" id="242058"/>
    <lineage>
        <taxon>Eukaryota</taxon>
        <taxon>Metazoa</taxon>
        <taxon>Chordata</taxon>
        <taxon>Craniata</taxon>
        <taxon>Vertebrata</taxon>
        <taxon>Euteleostomi</taxon>
        <taxon>Lepidosauria</taxon>
        <taxon>Squamata</taxon>
        <taxon>Bifurcata</taxon>
        <taxon>Unidentata</taxon>
        <taxon>Episquamata</taxon>
        <taxon>Toxicofera</taxon>
        <taxon>Serpentes</taxon>
        <taxon>Colubroidea</taxon>
        <taxon>Viperidae</taxon>
        <taxon>Crotalinae</taxon>
        <taxon>Protobothrops</taxon>
    </lineage>
</organism>